<sequence>MSRRCELTGKAVQVGHLVSHSNRKTKCRFLPNLCNVTLQSDTLNRRVRLRVTAHALRSVEHRGGLDAFLVKAREIELSQTARLLKREIEKKIAEPATPAAA</sequence>
<name>RL28_METEP</name>
<protein>
    <recommendedName>
        <fullName evidence="1">Large ribosomal subunit protein bL28</fullName>
    </recommendedName>
    <alternativeName>
        <fullName evidence="2">50S ribosomal protein L28</fullName>
    </alternativeName>
</protein>
<reference key="1">
    <citation type="submission" date="2007-12" db="EMBL/GenBank/DDBJ databases">
        <title>Complete sequence of Methylobacterium extorquens PA1.</title>
        <authorList>
            <consortium name="US DOE Joint Genome Institute"/>
            <person name="Copeland A."/>
            <person name="Lucas S."/>
            <person name="Lapidus A."/>
            <person name="Barry K."/>
            <person name="Glavina del Rio T."/>
            <person name="Dalin E."/>
            <person name="Tice H."/>
            <person name="Pitluck S."/>
            <person name="Saunders E."/>
            <person name="Brettin T."/>
            <person name="Bruce D."/>
            <person name="Detter J.C."/>
            <person name="Han C."/>
            <person name="Schmutz J."/>
            <person name="Larimer F."/>
            <person name="Land M."/>
            <person name="Hauser L."/>
            <person name="Kyrpides N."/>
            <person name="Kim E."/>
            <person name="Marx C."/>
            <person name="Richardson P."/>
        </authorList>
    </citation>
    <scope>NUCLEOTIDE SEQUENCE [LARGE SCALE GENOMIC DNA]</scope>
    <source>
        <strain>PA1</strain>
    </source>
</reference>
<accession>A9W6T5</accession>
<comment type="similarity">
    <text evidence="1">Belongs to the bacterial ribosomal protein bL28 family.</text>
</comment>
<organism>
    <name type="scientific">Methylorubrum extorquens (strain PA1)</name>
    <name type="common">Methylobacterium extorquens</name>
    <dbReference type="NCBI Taxonomy" id="419610"/>
    <lineage>
        <taxon>Bacteria</taxon>
        <taxon>Pseudomonadati</taxon>
        <taxon>Pseudomonadota</taxon>
        <taxon>Alphaproteobacteria</taxon>
        <taxon>Hyphomicrobiales</taxon>
        <taxon>Methylobacteriaceae</taxon>
        <taxon>Methylorubrum</taxon>
    </lineage>
</organism>
<evidence type="ECO:0000255" key="1">
    <source>
        <dbReference type="HAMAP-Rule" id="MF_00373"/>
    </source>
</evidence>
<evidence type="ECO:0000305" key="2"/>
<proteinExistence type="inferred from homology"/>
<feature type="chain" id="PRO_1000121654" description="Large ribosomal subunit protein bL28">
    <location>
        <begin position="1"/>
        <end position="101"/>
    </location>
</feature>
<dbReference type="EMBL" id="CP000908">
    <property type="protein sequence ID" value="ABY31367.1"/>
    <property type="molecule type" value="Genomic_DNA"/>
</dbReference>
<dbReference type="RefSeq" id="WP_003599321.1">
    <property type="nucleotide sequence ID" value="NC_010172.1"/>
</dbReference>
<dbReference type="SMR" id="A9W6T5"/>
<dbReference type="GeneID" id="72990622"/>
<dbReference type="KEGG" id="mex:Mext_2978"/>
<dbReference type="eggNOG" id="COG0227">
    <property type="taxonomic scope" value="Bacteria"/>
</dbReference>
<dbReference type="HOGENOM" id="CLU_064548_4_2_5"/>
<dbReference type="BioCyc" id="MEXT419610:MEXT_RS14995-MONOMER"/>
<dbReference type="GO" id="GO:0022625">
    <property type="term" value="C:cytosolic large ribosomal subunit"/>
    <property type="evidence" value="ECO:0007669"/>
    <property type="project" value="TreeGrafter"/>
</dbReference>
<dbReference type="GO" id="GO:0003735">
    <property type="term" value="F:structural constituent of ribosome"/>
    <property type="evidence" value="ECO:0007669"/>
    <property type="project" value="InterPro"/>
</dbReference>
<dbReference type="GO" id="GO:0006412">
    <property type="term" value="P:translation"/>
    <property type="evidence" value="ECO:0007669"/>
    <property type="project" value="UniProtKB-UniRule"/>
</dbReference>
<dbReference type="Gene3D" id="2.30.170.40">
    <property type="entry name" value="Ribosomal protein L28/L24"/>
    <property type="match status" value="1"/>
</dbReference>
<dbReference type="HAMAP" id="MF_00373">
    <property type="entry name" value="Ribosomal_bL28"/>
    <property type="match status" value="1"/>
</dbReference>
<dbReference type="InterPro" id="IPR026569">
    <property type="entry name" value="Ribosomal_bL28"/>
</dbReference>
<dbReference type="InterPro" id="IPR034704">
    <property type="entry name" value="Ribosomal_bL28/bL31-like_sf"/>
</dbReference>
<dbReference type="InterPro" id="IPR001383">
    <property type="entry name" value="Ribosomal_bL28_bact-type"/>
</dbReference>
<dbReference type="InterPro" id="IPR037147">
    <property type="entry name" value="Ribosomal_bL28_sf"/>
</dbReference>
<dbReference type="NCBIfam" id="TIGR00009">
    <property type="entry name" value="L28"/>
    <property type="match status" value="1"/>
</dbReference>
<dbReference type="PANTHER" id="PTHR13528">
    <property type="entry name" value="39S RIBOSOMAL PROTEIN L28, MITOCHONDRIAL"/>
    <property type="match status" value="1"/>
</dbReference>
<dbReference type="PANTHER" id="PTHR13528:SF2">
    <property type="entry name" value="LARGE RIBOSOMAL SUBUNIT PROTEIN BL28M"/>
    <property type="match status" value="1"/>
</dbReference>
<dbReference type="Pfam" id="PF00830">
    <property type="entry name" value="Ribosomal_L28"/>
    <property type="match status" value="1"/>
</dbReference>
<dbReference type="SUPFAM" id="SSF143800">
    <property type="entry name" value="L28p-like"/>
    <property type="match status" value="1"/>
</dbReference>
<gene>
    <name evidence="1" type="primary">rpmB</name>
    <name type="ordered locus">Mext_2978</name>
</gene>
<keyword id="KW-0687">Ribonucleoprotein</keyword>
<keyword id="KW-0689">Ribosomal protein</keyword>